<proteinExistence type="inferred from homology"/>
<feature type="chain" id="PRO_1000132835" description="Ribosomal protein L11 methyltransferase">
    <location>
        <begin position="1"/>
        <end position="299"/>
    </location>
</feature>
<feature type="binding site" evidence="1">
    <location>
        <position position="140"/>
    </location>
    <ligand>
        <name>S-adenosyl-L-methionine</name>
        <dbReference type="ChEBI" id="CHEBI:59789"/>
    </ligand>
</feature>
<feature type="binding site" evidence="1">
    <location>
        <position position="161"/>
    </location>
    <ligand>
        <name>S-adenosyl-L-methionine</name>
        <dbReference type="ChEBI" id="CHEBI:59789"/>
    </ligand>
</feature>
<feature type="binding site" evidence="1">
    <location>
        <position position="183"/>
    </location>
    <ligand>
        <name>S-adenosyl-L-methionine</name>
        <dbReference type="ChEBI" id="CHEBI:59789"/>
    </ligand>
</feature>
<feature type="binding site" evidence="1">
    <location>
        <position position="232"/>
    </location>
    <ligand>
        <name>S-adenosyl-L-methionine</name>
        <dbReference type="ChEBI" id="CHEBI:59789"/>
    </ligand>
</feature>
<keyword id="KW-0963">Cytoplasm</keyword>
<keyword id="KW-0489">Methyltransferase</keyword>
<keyword id="KW-1185">Reference proteome</keyword>
<keyword id="KW-0949">S-adenosyl-L-methionine</keyword>
<keyword id="KW-0808">Transferase</keyword>
<comment type="function">
    <text evidence="1">Methylates ribosomal protein L11.</text>
</comment>
<comment type="catalytic activity">
    <reaction evidence="1">
        <text>L-lysyl-[protein] + 3 S-adenosyl-L-methionine = N(6),N(6),N(6)-trimethyl-L-lysyl-[protein] + 3 S-adenosyl-L-homocysteine + 3 H(+)</text>
        <dbReference type="Rhea" id="RHEA:54192"/>
        <dbReference type="Rhea" id="RHEA-COMP:9752"/>
        <dbReference type="Rhea" id="RHEA-COMP:13826"/>
        <dbReference type="ChEBI" id="CHEBI:15378"/>
        <dbReference type="ChEBI" id="CHEBI:29969"/>
        <dbReference type="ChEBI" id="CHEBI:57856"/>
        <dbReference type="ChEBI" id="CHEBI:59789"/>
        <dbReference type="ChEBI" id="CHEBI:61961"/>
    </reaction>
</comment>
<comment type="subcellular location">
    <subcellularLocation>
        <location evidence="1">Cytoplasm</location>
    </subcellularLocation>
</comment>
<comment type="similarity">
    <text evidence="1">Belongs to the methyltransferase superfamily. PrmA family.</text>
</comment>
<accession>Q31N39</accession>
<dbReference type="EC" id="2.1.1.-" evidence="1"/>
<dbReference type="EMBL" id="CP000100">
    <property type="protein sequence ID" value="ABB57530.1"/>
    <property type="molecule type" value="Genomic_DNA"/>
</dbReference>
<dbReference type="RefSeq" id="WP_011244795.1">
    <property type="nucleotide sequence ID" value="NZ_JACJTX010000004.1"/>
</dbReference>
<dbReference type="SMR" id="Q31N39"/>
<dbReference type="STRING" id="1140.Synpcc7942_1500"/>
<dbReference type="PaxDb" id="1140-Synpcc7942_1500"/>
<dbReference type="GeneID" id="72430466"/>
<dbReference type="KEGG" id="syf:Synpcc7942_1500"/>
<dbReference type="eggNOG" id="COG2264">
    <property type="taxonomic scope" value="Bacteria"/>
</dbReference>
<dbReference type="HOGENOM" id="CLU_049382_0_1_3"/>
<dbReference type="OrthoDB" id="9785995at2"/>
<dbReference type="BioCyc" id="SYNEL:SYNPCC7942_1500-MONOMER"/>
<dbReference type="Proteomes" id="UP000889800">
    <property type="component" value="Chromosome"/>
</dbReference>
<dbReference type="GO" id="GO:0005737">
    <property type="term" value="C:cytoplasm"/>
    <property type="evidence" value="ECO:0007669"/>
    <property type="project" value="UniProtKB-SubCell"/>
</dbReference>
<dbReference type="GO" id="GO:0016279">
    <property type="term" value="F:protein-lysine N-methyltransferase activity"/>
    <property type="evidence" value="ECO:0007669"/>
    <property type="project" value="RHEA"/>
</dbReference>
<dbReference type="GO" id="GO:0032259">
    <property type="term" value="P:methylation"/>
    <property type="evidence" value="ECO:0007669"/>
    <property type="project" value="UniProtKB-KW"/>
</dbReference>
<dbReference type="CDD" id="cd02440">
    <property type="entry name" value="AdoMet_MTases"/>
    <property type="match status" value="1"/>
</dbReference>
<dbReference type="Gene3D" id="3.40.50.150">
    <property type="entry name" value="Vaccinia Virus protein VP39"/>
    <property type="match status" value="1"/>
</dbReference>
<dbReference type="HAMAP" id="MF_00735">
    <property type="entry name" value="Methyltr_PrmA"/>
    <property type="match status" value="1"/>
</dbReference>
<dbReference type="InterPro" id="IPR050078">
    <property type="entry name" value="Ribosomal_L11_MeTrfase_PrmA"/>
</dbReference>
<dbReference type="InterPro" id="IPR004498">
    <property type="entry name" value="Ribosomal_PrmA_MeTrfase"/>
</dbReference>
<dbReference type="InterPro" id="IPR029063">
    <property type="entry name" value="SAM-dependent_MTases_sf"/>
</dbReference>
<dbReference type="NCBIfam" id="TIGR00406">
    <property type="entry name" value="prmA"/>
    <property type="match status" value="1"/>
</dbReference>
<dbReference type="PANTHER" id="PTHR43648">
    <property type="entry name" value="ELECTRON TRANSFER FLAVOPROTEIN BETA SUBUNIT LYSINE METHYLTRANSFERASE"/>
    <property type="match status" value="1"/>
</dbReference>
<dbReference type="PANTHER" id="PTHR43648:SF1">
    <property type="entry name" value="ELECTRON TRANSFER FLAVOPROTEIN BETA SUBUNIT LYSINE METHYLTRANSFERASE"/>
    <property type="match status" value="1"/>
</dbReference>
<dbReference type="Pfam" id="PF06325">
    <property type="entry name" value="PrmA"/>
    <property type="match status" value="1"/>
</dbReference>
<dbReference type="PIRSF" id="PIRSF000401">
    <property type="entry name" value="RPL11_MTase"/>
    <property type="match status" value="1"/>
</dbReference>
<dbReference type="SUPFAM" id="SSF53335">
    <property type="entry name" value="S-adenosyl-L-methionine-dependent methyltransferases"/>
    <property type="match status" value="1"/>
</dbReference>
<organism>
    <name type="scientific">Synechococcus elongatus (strain ATCC 33912 / PCC 7942 / FACHB-805)</name>
    <name type="common">Anacystis nidulans R2</name>
    <dbReference type="NCBI Taxonomy" id="1140"/>
    <lineage>
        <taxon>Bacteria</taxon>
        <taxon>Bacillati</taxon>
        <taxon>Cyanobacteriota</taxon>
        <taxon>Cyanophyceae</taxon>
        <taxon>Synechococcales</taxon>
        <taxon>Synechococcaceae</taxon>
        <taxon>Synechococcus</taxon>
    </lineage>
</organism>
<sequence length="299" mass="32930">MPVSQSWWQVEVHCDPLLEDLLYWRLSEAGGRGFVCESKAQGLQVHSYFPAELWEETIRDRLLQEINADAADLGLPTPSLSWQTLDEEDWSESWKRHWQPQELGDRFLIQPAWLEPEPSDRLLLQLDPGTAFGTGAHPTTQLCLEGLETVPVADKVIADVGCGSGILAIGALLLGAKQVYAVDTDPLAVGATQANAALNDLEGDRFWTAIGSADQLQPLHAQGVRFDGFLCNILAHIIQALTPTLSELASPGSWAIFSGLLTSQADTVSVTLEEYGWVIRDRASQGDWCRLVADFRPER</sequence>
<protein>
    <recommendedName>
        <fullName evidence="1">Ribosomal protein L11 methyltransferase</fullName>
        <shortName evidence="1">L11 Mtase</shortName>
        <ecNumber evidence="1">2.1.1.-</ecNumber>
    </recommendedName>
</protein>
<gene>
    <name evidence="1" type="primary">prmA</name>
    <name type="ordered locus">Synpcc7942_1500</name>
</gene>
<reference key="1">
    <citation type="submission" date="2005-08" db="EMBL/GenBank/DDBJ databases">
        <title>Complete sequence of chromosome 1 of Synechococcus elongatus PCC 7942.</title>
        <authorList>
            <consortium name="US DOE Joint Genome Institute"/>
            <person name="Copeland A."/>
            <person name="Lucas S."/>
            <person name="Lapidus A."/>
            <person name="Barry K."/>
            <person name="Detter J.C."/>
            <person name="Glavina T."/>
            <person name="Hammon N."/>
            <person name="Israni S."/>
            <person name="Pitluck S."/>
            <person name="Schmutz J."/>
            <person name="Larimer F."/>
            <person name="Land M."/>
            <person name="Kyrpides N."/>
            <person name="Lykidis A."/>
            <person name="Golden S."/>
            <person name="Richardson P."/>
        </authorList>
    </citation>
    <scope>NUCLEOTIDE SEQUENCE [LARGE SCALE GENOMIC DNA]</scope>
    <source>
        <strain>ATCC 33912 / PCC 7942 / FACHB-805</strain>
    </source>
</reference>
<evidence type="ECO:0000255" key="1">
    <source>
        <dbReference type="HAMAP-Rule" id="MF_00735"/>
    </source>
</evidence>
<name>PRMA_SYNE7</name>